<sequence length="796" mass="88511">MSFFGLENSGNARDGPLDFEESYKGYGEHELEENDYLNDETFGDNVQVGTDFDFGNPHSSGSSGNAIGGNGVGATARSYVAATAEGISGPRTDGTAAAGPLDLKPMESLWSTAPPPAMAPSPQSTMAPAPAPQQMAPLQPILSMQDLERQQRQMQQQFMNFHAMGHPQGLPQGPPQQQFPMQPASGQPGPSQFAPPPPPPGVNVNMNQMPMGPVQVPVQASPSPIGMSNTPSPGPVVGATKMPLQSGRRSKRDLSPEEQRRLQIRHAKVEKILKYSGLMTPRDKDFITRYQLSQIVTEDPYNEDFYFQVYKIIQRGGITSESNKGLIARAYLEHSGHRLGGRYKRTDIALQRMQSQVEKAVTVAKERPSKLKDQQAAAGNSSQDNKQANTVLGKISSTLNSKNPRRQLQIPRQQPSDPDALKDVTDSLTNVDLASSGSSSTGSSAAAVASKQRRRSSYAFNNGNGATNLNKSGGKKFILELIETVYEEILDLEANLRNGQQTDSTAMWEALHIDDSSYDVNPFISMLSFDKGIKIMPRIFNFLDKQQKLKILQKIFNELSHLQIIILSSYKTTPKPTLTQLKKVDLFQMIILKIIVSFLSNNSNFIEIMGLLLQLIRNNNVSFLTTSKIGLNLITILISRAALIKQDSSRSNILSSPEISTWNEIYDKLFTSLESKIQLIFPPREYNDHIMRLQNDKFMDEAYIWQFLASLALSGKLNHQRIIIDEVRDEIFATINEAETLQKKEKELSVLPQRSQELDTELKSIIYNKEKLYQDLNLFLNVMGLVYRDGEISELK</sequence>
<feature type="initiator methionine" description="Removed" evidence="36">
    <location>
        <position position="1"/>
    </location>
</feature>
<feature type="chain" id="PRO_0000058235" description="Deadenylation-dependent mRNA-decapping factor PAT1">
    <location>
        <begin position="2"/>
        <end position="796"/>
    </location>
</feature>
<feature type="region of interest" description="Disordered" evidence="1">
    <location>
        <begin position="1"/>
        <end position="21"/>
    </location>
</feature>
<feature type="region of interest" description="Disordered" evidence="1">
    <location>
        <begin position="164"/>
        <end position="200"/>
    </location>
</feature>
<feature type="region of interest" description="Disordered" evidence="1">
    <location>
        <begin position="365"/>
        <end position="465"/>
    </location>
</feature>
<feature type="compositionally biased region" description="Low complexity" evidence="1">
    <location>
        <begin position="165"/>
        <end position="192"/>
    </location>
</feature>
<feature type="compositionally biased region" description="Polar residues" evidence="1">
    <location>
        <begin position="377"/>
        <end position="402"/>
    </location>
</feature>
<feature type="compositionally biased region" description="Low complexity" evidence="1">
    <location>
        <begin position="406"/>
        <end position="415"/>
    </location>
</feature>
<feature type="compositionally biased region" description="Low complexity" evidence="1">
    <location>
        <begin position="434"/>
        <end position="450"/>
    </location>
</feature>
<feature type="modified residue" description="N-acetylserine" evidence="36">
    <location>
        <position position="2"/>
    </location>
</feature>
<feature type="modified residue" description="Phosphoserine" evidence="35">
    <location>
        <position position="456"/>
    </location>
</feature>
<feature type="modified residue" description="Phosphoserine" evidence="35">
    <location>
        <position position="457"/>
    </location>
</feature>
<feature type="sequence conflict" description="In Ref. 1; CAC42990." evidence="34" ref="1">
    <original>D</original>
    <variation>V</variation>
    <location>
        <position position="688"/>
    </location>
</feature>
<feature type="helix" evidence="37">
    <location>
        <begin position="33"/>
        <end position="35"/>
    </location>
</feature>
<feature type="helix" evidence="37">
    <location>
        <begin position="38"/>
        <end position="41"/>
    </location>
</feature>
<feature type="helix" evidence="40">
    <location>
        <begin position="469"/>
        <end position="472"/>
    </location>
</feature>
<feature type="helix" evidence="40">
    <location>
        <begin position="475"/>
        <end position="497"/>
    </location>
</feature>
<feature type="helix" evidence="40">
    <location>
        <begin position="505"/>
        <end position="509"/>
    </location>
</feature>
<feature type="turn" evidence="38">
    <location>
        <begin position="511"/>
        <end position="514"/>
    </location>
</feature>
<feature type="strand" evidence="40">
    <location>
        <begin position="517"/>
        <end position="520"/>
    </location>
</feature>
<feature type="helix" evidence="40">
    <location>
        <begin position="522"/>
        <end position="526"/>
    </location>
</feature>
<feature type="helix" evidence="40">
    <location>
        <begin position="530"/>
        <end position="541"/>
    </location>
</feature>
<feature type="helix" evidence="40">
    <location>
        <begin position="545"/>
        <end position="557"/>
    </location>
</feature>
<feature type="helix" evidence="40">
    <location>
        <begin position="559"/>
        <end position="561"/>
    </location>
</feature>
<feature type="helix" evidence="40">
    <location>
        <begin position="563"/>
        <end position="568"/>
    </location>
</feature>
<feature type="turn" evidence="40">
    <location>
        <begin position="570"/>
        <end position="572"/>
    </location>
</feature>
<feature type="helix" evidence="40">
    <location>
        <begin position="578"/>
        <end position="601"/>
    </location>
</feature>
<feature type="helix" evidence="40">
    <location>
        <begin position="605"/>
        <end position="618"/>
    </location>
</feature>
<feature type="helix" evidence="40">
    <location>
        <begin position="621"/>
        <end position="624"/>
    </location>
</feature>
<feature type="helix" evidence="40">
    <location>
        <begin position="628"/>
        <end position="643"/>
    </location>
</feature>
<feature type="helix" evidence="40">
    <location>
        <begin position="649"/>
        <end position="651"/>
    </location>
</feature>
<feature type="helix" evidence="40">
    <location>
        <begin position="661"/>
        <end position="673"/>
    </location>
</feature>
<feature type="helix" evidence="40">
    <location>
        <begin position="677"/>
        <end position="680"/>
    </location>
</feature>
<feature type="helix" evidence="40">
    <location>
        <begin position="684"/>
        <end position="694"/>
    </location>
</feature>
<feature type="helix" evidence="40">
    <location>
        <begin position="702"/>
        <end position="713"/>
    </location>
</feature>
<feature type="helix" evidence="40">
    <location>
        <begin position="717"/>
        <end position="749"/>
    </location>
</feature>
<feature type="strand" evidence="39">
    <location>
        <begin position="751"/>
        <end position="753"/>
    </location>
</feature>
<feature type="helix" evidence="40">
    <location>
        <begin position="756"/>
        <end position="782"/>
    </location>
</feature>
<feature type="strand" evidence="40">
    <location>
        <begin position="785"/>
        <end position="788"/>
    </location>
</feature>
<feature type="strand" evidence="40">
    <location>
        <begin position="791"/>
        <end position="794"/>
    </location>
</feature>
<name>PAT1_YEAST</name>
<protein>
    <recommendedName>
        <fullName evidence="34">Deadenylation-dependent mRNA-decapping factor PAT1</fullName>
    </recommendedName>
    <alternativeName>
        <fullName>DNA topoisomerase 2-associated protein PAT1</fullName>
    </alternativeName>
    <alternativeName>
        <fullName>Decapping activator and translational repressor PAT1</fullName>
    </alternativeName>
    <alternativeName>
        <fullName>Topoisomerase II-associated protein PAT1</fullName>
    </alternativeName>
    <alternativeName>
        <fullName>mRNA turnover protein 1</fullName>
    </alternativeName>
</protein>
<evidence type="ECO:0000256" key="1">
    <source>
        <dbReference type="SAM" id="MobiDB-lite"/>
    </source>
</evidence>
<evidence type="ECO:0000269" key="2">
    <source>
    </source>
</evidence>
<evidence type="ECO:0000269" key="3">
    <source>
    </source>
</evidence>
<evidence type="ECO:0000269" key="4">
    <source>
    </source>
</evidence>
<evidence type="ECO:0000269" key="5">
    <source>
    </source>
</evidence>
<evidence type="ECO:0000269" key="6">
    <source>
    </source>
</evidence>
<evidence type="ECO:0000269" key="7">
    <source>
    </source>
</evidence>
<evidence type="ECO:0000269" key="8">
    <source>
    </source>
</evidence>
<evidence type="ECO:0000269" key="9">
    <source>
    </source>
</evidence>
<evidence type="ECO:0000269" key="10">
    <source>
    </source>
</evidence>
<evidence type="ECO:0000269" key="11">
    <source>
    </source>
</evidence>
<evidence type="ECO:0000269" key="12">
    <source>
    </source>
</evidence>
<evidence type="ECO:0000269" key="13">
    <source>
    </source>
</evidence>
<evidence type="ECO:0000269" key="14">
    <source>
    </source>
</evidence>
<evidence type="ECO:0000269" key="15">
    <source>
    </source>
</evidence>
<evidence type="ECO:0000269" key="16">
    <source>
    </source>
</evidence>
<evidence type="ECO:0000269" key="17">
    <source>
    </source>
</evidence>
<evidence type="ECO:0000269" key="18">
    <source>
    </source>
</evidence>
<evidence type="ECO:0000269" key="19">
    <source>
    </source>
</evidence>
<evidence type="ECO:0000269" key="20">
    <source>
    </source>
</evidence>
<evidence type="ECO:0000269" key="21">
    <source>
    </source>
</evidence>
<evidence type="ECO:0000269" key="22">
    <source>
    </source>
</evidence>
<evidence type="ECO:0000269" key="23">
    <source>
    </source>
</evidence>
<evidence type="ECO:0000269" key="24">
    <source>
    </source>
</evidence>
<evidence type="ECO:0000269" key="25">
    <source>
    </source>
</evidence>
<evidence type="ECO:0000269" key="26">
    <source>
    </source>
</evidence>
<evidence type="ECO:0000269" key="27">
    <source>
    </source>
</evidence>
<evidence type="ECO:0000269" key="28">
    <source>
    </source>
</evidence>
<evidence type="ECO:0000269" key="29">
    <source>
    </source>
</evidence>
<evidence type="ECO:0000269" key="30">
    <source>
    </source>
</evidence>
<evidence type="ECO:0000269" key="31">
    <source>
    </source>
</evidence>
<evidence type="ECO:0000269" key="32">
    <source>
    </source>
</evidence>
<evidence type="ECO:0000269" key="33">
    <source>
    </source>
</evidence>
<evidence type="ECO:0000305" key="34"/>
<evidence type="ECO:0007744" key="35">
    <source>
    </source>
</evidence>
<evidence type="ECO:0007744" key="36">
    <source>
    </source>
</evidence>
<evidence type="ECO:0007829" key="37">
    <source>
        <dbReference type="PDB" id="4BRW"/>
    </source>
</evidence>
<evidence type="ECO:0007829" key="38">
    <source>
        <dbReference type="PDB" id="4OGP"/>
    </source>
</evidence>
<evidence type="ECO:0007829" key="39">
    <source>
        <dbReference type="PDB" id="4OJJ"/>
    </source>
</evidence>
<evidence type="ECO:0007829" key="40">
    <source>
        <dbReference type="PDB" id="5LMG"/>
    </source>
</evidence>
<dbReference type="EMBL" id="X59720">
    <property type="protein sequence ID" value="CAC42990.1"/>
    <property type="molecule type" value="Genomic_DNA"/>
</dbReference>
<dbReference type="EMBL" id="BK006937">
    <property type="protein sequence ID" value="DAA07549.2"/>
    <property type="molecule type" value="Genomic_DNA"/>
</dbReference>
<dbReference type="PIR" id="S53590">
    <property type="entry name" value="S53590"/>
</dbReference>
<dbReference type="RefSeq" id="NP_010002.3">
    <property type="nucleotide sequence ID" value="NM_001178786.2"/>
</dbReference>
<dbReference type="PDB" id="4BRW">
    <property type="method" value="X-ray"/>
    <property type="resolution" value="2.80 A"/>
    <property type="chains" value="B=5-79"/>
</dbReference>
<dbReference type="PDB" id="4C8Q">
    <property type="method" value="X-ray"/>
    <property type="resolution" value="3.70 A"/>
    <property type="chains" value="H=456-783"/>
</dbReference>
<dbReference type="PDB" id="4N0A">
    <property type="method" value="X-ray"/>
    <property type="resolution" value="3.15 A"/>
    <property type="chains" value="H/I/J=422-796"/>
</dbReference>
<dbReference type="PDB" id="4OGP">
    <property type="method" value="X-ray"/>
    <property type="resolution" value="2.15 A"/>
    <property type="chains" value="A/B=473-796"/>
</dbReference>
<dbReference type="PDB" id="4OJJ">
    <property type="method" value="X-ray"/>
    <property type="resolution" value="2.32 A"/>
    <property type="chains" value="A/B/C=473-796"/>
</dbReference>
<dbReference type="PDB" id="5LM5">
    <property type="method" value="X-ray"/>
    <property type="resolution" value="2.60 A"/>
    <property type="chains" value="A/B=435-796"/>
</dbReference>
<dbReference type="PDB" id="5LMF">
    <property type="method" value="X-ray"/>
    <property type="resolution" value="2.15 A"/>
    <property type="chains" value="A/B=435-796"/>
</dbReference>
<dbReference type="PDB" id="5LMG">
    <property type="method" value="X-ray"/>
    <property type="resolution" value="1.89 A"/>
    <property type="chains" value="A/B=435-796"/>
</dbReference>
<dbReference type="PDBsum" id="4BRW"/>
<dbReference type="PDBsum" id="4C8Q"/>
<dbReference type="PDBsum" id="4N0A"/>
<dbReference type="PDBsum" id="4OGP"/>
<dbReference type="PDBsum" id="4OJJ"/>
<dbReference type="PDBsum" id="5LM5"/>
<dbReference type="PDBsum" id="5LMF"/>
<dbReference type="PDBsum" id="5LMG"/>
<dbReference type="SMR" id="P25644"/>
<dbReference type="BioGRID" id="31052">
    <property type="interactions" value="1296"/>
</dbReference>
<dbReference type="ComplexPortal" id="CPX-112">
    <property type="entry name" value="LSM1-7-PAT1 complex"/>
</dbReference>
<dbReference type="DIP" id="DIP-883N"/>
<dbReference type="FunCoup" id="P25644">
    <property type="interactions" value="325"/>
</dbReference>
<dbReference type="IntAct" id="P25644">
    <property type="interactions" value="101"/>
</dbReference>
<dbReference type="MINT" id="P25644"/>
<dbReference type="STRING" id="4932.YCR077C"/>
<dbReference type="GlyGen" id="P25644">
    <property type="glycosylation" value="2 sites, 1 O-linked glycan (2 sites)"/>
</dbReference>
<dbReference type="iPTMnet" id="P25644"/>
<dbReference type="PaxDb" id="4932-YCR077C"/>
<dbReference type="PeptideAtlas" id="P25644"/>
<dbReference type="EnsemblFungi" id="YCR077C_mRNA">
    <property type="protein sequence ID" value="YCR077C"/>
    <property type="gene ID" value="YCR077C"/>
</dbReference>
<dbReference type="GeneID" id="850440"/>
<dbReference type="KEGG" id="sce:YCR077C"/>
<dbReference type="AGR" id="SGD:S000000673"/>
<dbReference type="SGD" id="S000000673">
    <property type="gene designation" value="PAT1"/>
</dbReference>
<dbReference type="VEuPathDB" id="FungiDB:YCR077C"/>
<dbReference type="eggNOG" id="KOG4592">
    <property type="taxonomic scope" value="Eukaryota"/>
</dbReference>
<dbReference type="GeneTree" id="ENSGT00520000055649"/>
<dbReference type="HOGENOM" id="CLU_012622_1_0_1"/>
<dbReference type="InParanoid" id="P25644"/>
<dbReference type="OMA" id="YLEHSGH"/>
<dbReference type="OrthoDB" id="74835at2759"/>
<dbReference type="BioCyc" id="YEAST:G3O-29376-MONOMER"/>
<dbReference type="Reactome" id="R-SCE-430039">
    <property type="pathway name" value="mRNA decay by 5' to 3' exoribonuclease"/>
</dbReference>
<dbReference type="BioGRID-ORCS" id="850440">
    <property type="hits" value="1 hit in 10 CRISPR screens"/>
</dbReference>
<dbReference type="CD-CODE" id="A771B61B">
    <property type="entry name" value="Synthetic Condensate 000236"/>
</dbReference>
<dbReference type="CD-CODE" id="A777E0F8">
    <property type="entry name" value="P-body"/>
</dbReference>
<dbReference type="CD-CODE" id="DAAE2994">
    <property type="entry name" value="Synthetic Condensate 000235"/>
</dbReference>
<dbReference type="CD-CODE" id="DFF57E3B">
    <property type="entry name" value="Synthetic Condensate 000241"/>
</dbReference>
<dbReference type="CD-CODE" id="E7338DBF">
    <property type="entry name" value="Synthetic Condensate 000343"/>
</dbReference>
<dbReference type="EvolutionaryTrace" id="P25644"/>
<dbReference type="PRO" id="PR:P25644"/>
<dbReference type="Proteomes" id="UP000002311">
    <property type="component" value="Chromosome III"/>
</dbReference>
<dbReference type="RNAct" id="P25644">
    <property type="molecule type" value="protein"/>
</dbReference>
<dbReference type="GO" id="GO:0005737">
    <property type="term" value="C:cytoplasm"/>
    <property type="evidence" value="ECO:0000314"/>
    <property type="project" value="SGD"/>
</dbReference>
<dbReference type="GO" id="GO:0010494">
    <property type="term" value="C:cytoplasmic stress granule"/>
    <property type="evidence" value="ECO:0000314"/>
    <property type="project" value="SGD"/>
</dbReference>
<dbReference type="GO" id="GO:0022627">
    <property type="term" value="C:cytosolic small ribosomal subunit"/>
    <property type="evidence" value="ECO:0000314"/>
    <property type="project" value="SGD"/>
</dbReference>
<dbReference type="GO" id="GO:0000776">
    <property type="term" value="C:kinetochore"/>
    <property type="evidence" value="ECO:0000314"/>
    <property type="project" value="SGD"/>
</dbReference>
<dbReference type="GO" id="GO:1990726">
    <property type="term" value="C:Lsm1-7-Pat1 complex"/>
    <property type="evidence" value="ECO:0000314"/>
    <property type="project" value="SGD"/>
</dbReference>
<dbReference type="GO" id="GO:0005634">
    <property type="term" value="C:nucleus"/>
    <property type="evidence" value="ECO:0000314"/>
    <property type="project" value="SGD"/>
</dbReference>
<dbReference type="GO" id="GO:0000932">
    <property type="term" value="C:P-body"/>
    <property type="evidence" value="ECO:0000314"/>
    <property type="project" value="ComplexPortal"/>
</dbReference>
<dbReference type="GO" id="GO:0003682">
    <property type="term" value="F:chromatin binding"/>
    <property type="evidence" value="ECO:0000314"/>
    <property type="project" value="SGD"/>
</dbReference>
<dbReference type="GO" id="GO:0003729">
    <property type="term" value="F:mRNA binding"/>
    <property type="evidence" value="ECO:0000314"/>
    <property type="project" value="SGD"/>
</dbReference>
<dbReference type="GO" id="GO:0003723">
    <property type="term" value="F:RNA binding"/>
    <property type="evidence" value="ECO:0000314"/>
    <property type="project" value="SGD"/>
</dbReference>
<dbReference type="GO" id="GO:0051301">
    <property type="term" value="P:cell division"/>
    <property type="evidence" value="ECO:0007669"/>
    <property type="project" value="UniProtKB-KW"/>
</dbReference>
<dbReference type="GO" id="GO:0042149">
    <property type="term" value="P:cellular response to glucose starvation"/>
    <property type="evidence" value="ECO:0000315"/>
    <property type="project" value="SGD"/>
</dbReference>
<dbReference type="GO" id="GO:0000290">
    <property type="term" value="P:deadenylation-dependent decapping of nuclear-transcribed mRNA"/>
    <property type="evidence" value="ECO:0000315"/>
    <property type="project" value="SGD"/>
</dbReference>
<dbReference type="GO" id="GO:0001731">
    <property type="term" value="P:formation of translation preinitiation complex"/>
    <property type="evidence" value="ECO:0000315"/>
    <property type="project" value="SGD"/>
</dbReference>
<dbReference type="GO" id="GO:0006397">
    <property type="term" value="P:mRNA processing"/>
    <property type="evidence" value="ECO:0007669"/>
    <property type="project" value="UniProtKB-KW"/>
</dbReference>
<dbReference type="GO" id="GO:0045947">
    <property type="term" value="P:negative regulation of translational initiation"/>
    <property type="evidence" value="ECO:0000314"/>
    <property type="project" value="SGD"/>
</dbReference>
<dbReference type="GO" id="GO:0033962">
    <property type="term" value="P:P-body assembly"/>
    <property type="evidence" value="ECO:0000315"/>
    <property type="project" value="SGD"/>
</dbReference>
<dbReference type="GO" id="GO:0006446">
    <property type="term" value="P:regulation of translational initiation"/>
    <property type="evidence" value="ECO:0000315"/>
    <property type="project" value="SGD"/>
</dbReference>
<dbReference type="DisProt" id="DP01825"/>
<dbReference type="InterPro" id="IPR039900">
    <property type="entry name" value="Pat1-like"/>
</dbReference>
<dbReference type="InterPro" id="IPR019167">
    <property type="entry name" value="PAT1_dom"/>
</dbReference>
<dbReference type="PANTHER" id="PTHR21551:SF0">
    <property type="entry name" value="PROTEIN ASSOCIATED WITH TOPO II RELATED-1, ISOFORM A"/>
    <property type="match status" value="1"/>
</dbReference>
<dbReference type="PANTHER" id="PTHR21551">
    <property type="entry name" value="TOPOISOMERASE II-ASSOCIATED PROTEIN PAT1"/>
    <property type="match status" value="1"/>
</dbReference>
<dbReference type="Pfam" id="PF09770">
    <property type="entry name" value="PAT1"/>
    <property type="match status" value="2"/>
</dbReference>
<accession>P25644</accession>
<accession>D6VR80</accession>
<accession>Q8NKJ3</accession>
<keyword id="KW-0002">3D-structure</keyword>
<keyword id="KW-0007">Acetylation</keyword>
<keyword id="KW-0131">Cell cycle</keyword>
<keyword id="KW-0132">Cell division</keyword>
<keyword id="KW-0137">Centromere</keyword>
<keyword id="KW-0158">Chromosome</keyword>
<keyword id="KW-0963">Cytoplasm</keyword>
<keyword id="KW-0995">Kinetochore</keyword>
<keyword id="KW-0507">mRNA processing</keyword>
<keyword id="KW-0539">Nucleus</keyword>
<keyword id="KW-0597">Phosphoprotein</keyword>
<keyword id="KW-1185">Reference proteome</keyword>
<keyword id="KW-0678">Repressor</keyword>
<keyword id="KW-0694">RNA-binding</keyword>
<keyword id="KW-0810">Translation regulation</keyword>
<proteinExistence type="evidence at protein level"/>
<gene>
    <name type="primary">PAT1</name>
    <name type="synonym">MRT1</name>
    <name type="ordered locus">YCR077C</name>
    <name type="ORF">YCR77C</name>
</gene>
<comment type="function">
    <text evidence="2 3 4 5 6 7 8 9 14 16 18 19 20 21 22 23 24 27 29 30 31 32 33">Activator of decapping that functions as a general and active mechanism of translational repression and required for P-body formation. First decay factor recruited to mRNA, at a time when the mRNA is still associated with translation factors. Subsequently, PAT1 recruits the hepta-heterodimer LSM1-LSM7 complex to P-bodies (PubMed:10523645, PubMed:10747033, PubMed:10761922, PubMed:10913177, PubMed:11027264, PubMed:16179257, PubMed:17429074, PubMed:17513695, PubMed:17875743, PubMed:18086885, PubMed:18981231, PubMed:24247251, PubMed:25035297, PubMed:8816497). In association with the LSM1-LSM7 complex, stabilizes the 3' terminus of mRNAs (PubMed:11514438). This association is also required for mosaic virus genomic RNA translation (PubMed:12773554). Also together with the LSM1-LSM7 complex, the LSM1-LSM7 complex binds to osmotic stress-activated mRNAs to attenuate the osmotic stress response, probably by limiting ribosome access to the mRNA and consequently translation (PubMed:30059503). Modulates the rates of mRNA-decapping that occur following deadenylation (PubMed:10523645, PubMed:10747033, PubMed:10761922, PubMed:10913177, PubMed:11027264, PubMed:16179257, PubMed:17429074, PubMed:17513695, PubMed:17875743, PubMed:18086885, PubMed:18981231, PubMed:24247251, PubMed:25035297, PubMed:8816497). Might be required for promoting the formation or the stabilization of the pre-initiation translation complexes (PubMed:10779343, PubMed:20832728). Required for 40S ribosomal subunit joining to capped and/or polyadenylated mRNA (PubMed:10779343). With other P-body components, enhances the formation of retrotransposition-competent Ty1 virus-like particles (PubMed:19901074). Structural component of the kinetochore and associates with centromeres in a NDC10-dependent manner. Involved in maintaining the structural integrity of centromeric chromatin to facilitate faithful chromosome segregation and proper kinetochore function (PubMed:10394921, PubMed:23893485, PubMed:8972867).</text>
</comment>
<comment type="subunit">
    <text evidence="5 7 10 11 12 17 20 28 29">Associates with the 40S ribosomal subunit. Associates with the heptameric LSM1-LSM7 complex. Interacts directly with LSM2 and LSM3 within the LSM1-LSM7 complex. Interacts with DHH1, LSM1, LSM5, RPB4, RPB7 and with topoisomerase TOP2. Interacts with CDC33, PAB1, TIF4631 and TIF4632 in an RNA-dependent manner. Binds mRNAs.</text>
</comment>
<comment type="interaction">
    <interactant intactId="EBI-204">
        <id>P25644</id>
    </interactant>
    <interactant intactId="EBI-270">
        <id>P53550</id>
        <label>DCP2</label>
    </interactant>
    <organismsDiffer>false</organismsDiffer>
    <experiments>3</experiments>
</comment>
<comment type="interaction">
    <interactant intactId="EBI-204">
        <id>P25644</id>
    </interactant>
    <interactant intactId="EBI-158">
        <id>P39517</id>
        <label>DHH1</label>
    </interactant>
    <organismsDiffer>false</organismsDiffer>
    <experiments>8</experiments>
</comment>
<comment type="interaction">
    <interactant intactId="EBI-204">
        <id>P25644</id>
    </interactant>
    <interactant intactId="EBI-174">
        <id>P47017</id>
        <label>LSM1</label>
    </interactant>
    <organismsDiffer>false</organismsDiffer>
    <experiments>6</experiments>
</comment>
<comment type="interaction">
    <interactant intactId="EBI-204">
        <id>P25644</id>
    </interactant>
    <interactant intactId="EBI-180">
        <id>P38203</id>
        <label>LSM2</label>
    </interactant>
    <organismsDiffer>false</organismsDiffer>
    <experiments>6</experiments>
</comment>
<comment type="interaction">
    <interactant intactId="EBI-204">
        <id>P25644</id>
    </interactant>
    <interactant intactId="EBI-10227">
        <id>P57743</id>
        <label>LSM3</label>
    </interactant>
    <organismsDiffer>false</organismsDiffer>
    <experiments>3</experiments>
</comment>
<comment type="interaction">
    <interactant intactId="EBI-204">
        <id>P25644</id>
    </interactant>
    <interactant intactId="EBI-188">
        <id>P40070</id>
        <label>LSM4</label>
    </interactant>
    <organismsDiffer>false</organismsDiffer>
    <experiments>8</experiments>
</comment>
<comment type="interaction">
    <interactant intactId="EBI-204">
        <id>P25644</id>
    </interactant>
    <interactant intactId="EBI-10236">
        <id>P40089</id>
        <label>LSM5</label>
    </interactant>
    <organismsDiffer>false</organismsDiffer>
    <experiments>3</experiments>
</comment>
<comment type="interaction">
    <interactant intactId="EBI-204">
        <id>P25644</id>
    </interactant>
    <interactant intactId="EBI-196">
        <id>Q06406</id>
        <label>LSM6</label>
    </interactant>
    <organismsDiffer>false</organismsDiffer>
    <experiments>3</experiments>
</comment>
<comment type="interaction">
    <interactant intactId="EBI-204">
        <id>P25644</id>
    </interactant>
    <interactant intactId="EBI-141">
        <id>P53905</id>
        <label>LSM7</label>
    </interactant>
    <organismsDiffer>false</organismsDiffer>
    <experiments>4</experiments>
</comment>
<comment type="subcellular location">
    <subcellularLocation>
        <location evidence="6 26">Cytoplasm</location>
    </subcellularLocation>
    <subcellularLocation>
        <location evidence="26">Nucleus</location>
    </subcellularLocation>
    <subcellularLocation>
        <location evidence="13 25">Cytoplasm</location>
        <location evidence="13 25">P-body</location>
    </subcellularLocation>
    <subcellularLocation>
        <location evidence="27">Chromosome</location>
        <location evidence="27">Centromere</location>
        <location evidence="27">Kinetochore</location>
    </subcellularLocation>
    <subcellularLocation>
        <location evidence="25">Cytoplasm</location>
        <location evidence="25">Stress granule</location>
    </subcellularLocation>
    <text evidence="26">Shuttles between cytoplasm and nucleus. Exported in complex with LSM1.</text>
</comment>
<comment type="domain">
    <text evidence="21">The region at residues 254 to 422 is required for stimulation of decapping. The region at residues 422 to 763 is required for PAT1 and LSM1 to accumulate in P-bodies and responsible for translation repression and P-body assembly.</text>
</comment>
<comment type="disruption phenotype">
    <text evidence="31">Increases the level of stress-responsive gene mRNA during osmotic stress.</text>
</comment>
<comment type="miscellaneous">
    <text evidence="15">Present with 656 molecules/cell in log phase SD medium.</text>
</comment>
<comment type="similarity">
    <text evidence="34">Belongs to the PAT1 family.</text>
</comment>
<reference key="1">
    <citation type="journal article" date="1992" name="Nature">
        <title>The complete DNA sequence of yeast chromosome III.</title>
        <authorList>
            <person name="Oliver S.G."/>
            <person name="van der Aart Q.J.M."/>
            <person name="Agostoni-Carbone M.L."/>
            <person name="Aigle M."/>
            <person name="Alberghina L."/>
            <person name="Alexandraki D."/>
            <person name="Antoine G."/>
            <person name="Anwar R."/>
            <person name="Ballesta J.P.G."/>
            <person name="Benit P."/>
            <person name="Berben G."/>
            <person name="Bergantino E."/>
            <person name="Biteau N."/>
            <person name="Bolle P.-A."/>
            <person name="Bolotin-Fukuhara M."/>
            <person name="Brown A."/>
            <person name="Brown A.J.P."/>
            <person name="Buhler J.-M."/>
            <person name="Carcano C."/>
            <person name="Carignani G."/>
            <person name="Cederberg H."/>
            <person name="Chanet R."/>
            <person name="Contreras R."/>
            <person name="Crouzet M."/>
            <person name="Daignan-Fornier B."/>
            <person name="Defoor E."/>
            <person name="Delgado M.D."/>
            <person name="Demolder J."/>
            <person name="Doira C."/>
            <person name="Dubois E."/>
            <person name="Dujon B."/>
            <person name="Duesterhoeft A."/>
            <person name="Erdmann D."/>
            <person name="Esteban M."/>
            <person name="Fabre F."/>
            <person name="Fairhead C."/>
            <person name="Faye G."/>
            <person name="Feldmann H."/>
            <person name="Fiers W."/>
            <person name="Francingues-Gaillard M.-C."/>
            <person name="Franco L."/>
            <person name="Frontali L."/>
            <person name="Fukuhara H."/>
            <person name="Fuller L.J."/>
            <person name="Galland P."/>
            <person name="Gent M.E."/>
            <person name="Gigot D."/>
            <person name="Gilliquet V."/>
            <person name="Glansdorff N."/>
            <person name="Goffeau A."/>
            <person name="Grenson M."/>
            <person name="Grisanti P."/>
            <person name="Grivell L.A."/>
            <person name="de Haan M."/>
            <person name="Haasemann M."/>
            <person name="Hatat D."/>
            <person name="Hoenicka J."/>
            <person name="Hegemann J.H."/>
            <person name="Herbert C.J."/>
            <person name="Hilger F."/>
            <person name="Hohmann S."/>
            <person name="Hollenberg C.P."/>
            <person name="Huse K."/>
            <person name="Iborra F."/>
            <person name="Indge K.J."/>
            <person name="Isono K."/>
            <person name="Jacq C."/>
            <person name="Jacquet M."/>
            <person name="James C.M."/>
            <person name="Jauniaux J.-C."/>
            <person name="Jia Y."/>
            <person name="Jimenez A."/>
            <person name="Kelly A."/>
            <person name="Kleinhans U."/>
            <person name="Kreisl P."/>
            <person name="Lanfranchi G."/>
            <person name="Lewis C."/>
            <person name="van der Linden C.G."/>
            <person name="Lucchini G."/>
            <person name="Lutzenkirchen K."/>
            <person name="Maat M.J."/>
            <person name="Mallet L."/>
            <person name="Mannhaupt G."/>
            <person name="Martegani E."/>
            <person name="Mathieu A."/>
            <person name="Maurer C.T.C."/>
            <person name="McConnell D."/>
            <person name="McKee R.A."/>
            <person name="Messenguy F."/>
            <person name="Mewes H.-W."/>
            <person name="Molemans F."/>
            <person name="Montague M.A."/>
            <person name="Muzi Falconi M."/>
            <person name="Navas L."/>
            <person name="Newlon C.S."/>
            <person name="Noone D."/>
            <person name="Pallier C."/>
            <person name="Panzeri L."/>
            <person name="Pearson B.M."/>
            <person name="Perea J."/>
            <person name="Philippsen P."/>
            <person name="Pierard A."/>
            <person name="Planta R.J."/>
            <person name="Plevani P."/>
            <person name="Poetsch B."/>
            <person name="Pohl F.M."/>
            <person name="Purnelle B."/>
            <person name="Ramezani Rad M."/>
            <person name="Rasmussen S.W."/>
            <person name="Raynal A."/>
            <person name="Remacha M.A."/>
            <person name="Richterich P."/>
            <person name="Roberts A.B."/>
            <person name="Rodriguez F."/>
            <person name="Sanz E."/>
            <person name="Schaaff-Gerstenschlaeger I."/>
            <person name="Scherens B."/>
            <person name="Schweitzer B."/>
            <person name="Shu Y."/>
            <person name="Skala J."/>
            <person name="Slonimski P.P."/>
            <person name="Sor F."/>
            <person name="Soustelle C."/>
            <person name="Spiegelberg R."/>
            <person name="Stateva L.I."/>
            <person name="Steensma H.Y."/>
            <person name="Steiner S."/>
            <person name="Thierry A."/>
            <person name="Thireos G."/>
            <person name="Tzermia M."/>
            <person name="Urrestarazu L.A."/>
            <person name="Valle G."/>
            <person name="Vetter I."/>
            <person name="van Vliet-Reedijk J.C."/>
            <person name="Voet M."/>
            <person name="Volckaert G."/>
            <person name="Vreken P."/>
            <person name="Wang H."/>
            <person name="Warmington J.R."/>
            <person name="von Wettstein D."/>
            <person name="Wicksteed B.L."/>
            <person name="Wilson C."/>
            <person name="Wurst H."/>
            <person name="Xu G."/>
            <person name="Yoshikawa A."/>
            <person name="Zimmermann F.K."/>
            <person name="Sgouros J.G."/>
        </authorList>
    </citation>
    <scope>NUCLEOTIDE SEQUENCE [LARGE SCALE GENOMIC DNA]</scope>
    <source>
        <strain>ATCC 204508 / S288c</strain>
    </source>
</reference>
<reference key="2">
    <citation type="submission" date="2001-06" db="EMBL/GenBank/DDBJ databases">
        <authorList>
            <person name="Valles G."/>
            <person name="Volckaerts G."/>
        </authorList>
    </citation>
    <scope>SEQUENCE REVISION</scope>
</reference>
<reference key="3">
    <citation type="journal article" date="2014" name="G3 (Bethesda)">
        <title>The reference genome sequence of Saccharomyces cerevisiae: Then and now.</title>
        <authorList>
            <person name="Engel S.R."/>
            <person name="Dietrich F.S."/>
            <person name="Fisk D.G."/>
            <person name="Binkley G."/>
            <person name="Balakrishnan R."/>
            <person name="Costanzo M.C."/>
            <person name="Dwight S.S."/>
            <person name="Hitz B.C."/>
            <person name="Karra K."/>
            <person name="Nash R.S."/>
            <person name="Weng S."/>
            <person name="Wong E.D."/>
            <person name="Lloyd P."/>
            <person name="Skrzypek M.S."/>
            <person name="Miyasato S.R."/>
            <person name="Simison M."/>
            <person name="Cherry J.M."/>
        </authorList>
    </citation>
    <scope>GENOME REANNOTATION</scope>
    <scope>SEQUENCE REVISION TO 688</scope>
    <source>
        <strain>ATCC 204508 / S288c</strain>
    </source>
</reference>
<reference key="4">
    <citation type="journal article" date="1995" name="Yeast">
        <title>Identification and initial characterization of the cytosolic protein Ycr77p.</title>
        <authorList>
            <person name="Rodriguez-Cousino N."/>
            <person name="Lill R."/>
            <person name="Neupert W."/>
            <person name="Court D.A."/>
        </authorList>
    </citation>
    <scope>SEQUENCE REVISION</scope>
    <scope>CHARACTERIZATION</scope>
</reference>
<reference key="5">
    <citation type="journal article" date="1996" name="Mol. Cell. Biol.">
        <title>Mutations in trans-acting factors affecting mRNA decapping in Saccharomyces cerevisiae.</title>
        <authorList>
            <person name="Hatfield L."/>
            <person name="Beelman C.A."/>
            <person name="Stevens A."/>
            <person name="Parker R."/>
        </authorList>
    </citation>
    <scope>FUNCTION</scope>
</reference>
<reference key="6">
    <citation type="journal article" date="1996" name="Nucleic Acids Res.">
        <title>Pat1: a topoisomerase II-associated protein required for faithful chromosome transmission in Saccharomyces cerevisiae.</title>
        <authorList>
            <person name="Wang X."/>
            <person name="Watt P.M."/>
            <person name="Louis E.J."/>
            <person name="Borts R.H."/>
            <person name="Hickson I.D."/>
        </authorList>
    </citation>
    <scope>FUNCTION</scope>
</reference>
<reference key="7">
    <citation type="journal article" date="1999" name="Mol. Cell. Biol.">
        <title>Mutations in VPS16 and MRT1 stabilize mRNAs by activating an inhibitor of the decapping enzyme.</title>
        <authorList>
            <person name="Zhang S."/>
            <person name="Williams C.J."/>
            <person name="Hagan K."/>
            <person name="Peltz S.W."/>
        </authorList>
    </citation>
    <scope>FUNCTION</scope>
</reference>
<reference key="8">
    <citation type="journal article" date="1999" name="Mol. Gen. Genet.">
        <title>The topoisomerase II-associated protein, Pat1p, is required for maintenance of rDNA locus stability in Saccharomyces cerevisiae.</title>
        <authorList>
            <person name="Wang X."/>
            <person name="Watt P.M."/>
            <person name="Borts R.H."/>
            <person name="Louis E.J."/>
            <person name="Hickson I.D."/>
        </authorList>
    </citation>
    <scope>FUNCTION</scope>
</reference>
<reference key="9">
    <citation type="journal article" date="2000" name="EMBO J.">
        <title>A Sm-like protein complex that participates in mRNA degradation.</title>
        <authorList>
            <person name="Bouveret E."/>
            <person name="Rigaut G."/>
            <person name="Shevchenko A."/>
            <person name="Wilm M."/>
            <person name="Seraphin B."/>
        </authorList>
    </citation>
    <scope>FUNCTION</scope>
    <scope>ASSOCIATION WITH THE LSM1-LSM7 COMPLEX</scope>
</reference>
<reference key="10">
    <citation type="journal article" date="2000" name="Mol. Cell. Biol.">
        <title>Deletion of the PAT1 gene affects translation initiation and suppresses a PAB1 gene deletion in yeast.</title>
        <authorList>
            <person name="Wyers F."/>
            <person name="Minet M."/>
            <person name="Dufour M.E."/>
            <person name="Vo L.T."/>
            <person name="Lacroute F."/>
        </authorList>
    </citation>
    <scope>FUNCTION</scope>
    <scope>SUBCELLULAR LOCATION</scope>
    <scope>ASSOCIATION WITH THE 40S RIBOSOMAL SUBUNIT</scope>
</reference>
<reference key="11">
    <citation type="journal article" date="2000" name="Mol. Cell. Biol.">
        <title>The two proteins Pat1p (Mrt1p) and Spb8p interact in vivo, are required for mRNA decay, and are functionally linked to Pab1p.</title>
        <authorList>
            <person name="Bonnerot C."/>
            <person name="Boeck R."/>
            <person name="Lapeyre B."/>
        </authorList>
    </citation>
    <scope>FUNCTION</scope>
    <scope>INTERACTION WITH LSM1</scope>
</reference>
<reference key="12">
    <citation type="journal article" date="2000" name="Mol. Cell. Biol.">
        <title>mRNA decapping in yeast requires dissociation of the cap binding protein, eukaryotic translation initiation factor 4E.</title>
        <authorList>
            <person name="Schwartz D.C."/>
            <person name="Parker R."/>
        </authorList>
    </citation>
    <scope>FUNCTION</scope>
</reference>
<reference key="13">
    <citation type="journal article" date="2000" name="Nature">
        <title>Yeast Sm-like proteins function in mRNA decapping and decay.</title>
        <authorList>
            <person name="Tharun S."/>
            <person name="He W."/>
            <person name="Mayes A.E."/>
            <person name="Lennertz P."/>
            <person name="Beggs J.D."/>
            <person name="Parker R."/>
        </authorList>
    </citation>
    <scope>FUNCTION</scope>
    <scope>SUBCELLULAR LOCATION</scope>
    <scope>INTERACTION WITH LSM1 AND LSM5</scope>
</reference>
<reference key="14">
    <citation type="journal article" date="2001" name="Genetics">
        <title>The yeast cytoplasmic LsmI/Pat1p complex protects mRNA 3' termini from partial degradation.</title>
        <authorList>
            <person name="He W."/>
            <person name="Parker R."/>
        </authorList>
    </citation>
    <scope>FUNCTION</scope>
</reference>
<reference key="15">
    <citation type="journal article" date="2001" name="Mol. Cell">
        <title>Targeting an mRNA for decapping: displacement of translation factors and association of the Lsm1p-7p complex on deadenylated yeast mRNAs.</title>
        <authorList>
            <person name="Tharun S."/>
            <person name="Parker R."/>
        </authorList>
    </citation>
    <scope>INTERACTION WITH CDC33; PAB1; TIF4631 AND TIF4632</scope>
    <scope>MRNA-BINDING</scope>
</reference>
<reference key="16">
    <citation type="journal article" date="2001" name="RNA">
        <title>The DEAD box helicase, Dhh1p, functions in mRNA decapping and interacts with both the decapping and deadenylase complexes.</title>
        <authorList>
            <person name="Coller J.M."/>
            <person name="Tucker M."/>
            <person name="Sheth U."/>
            <person name="Valencia-Sanchez M.A."/>
            <person name="Parker R."/>
        </authorList>
    </citation>
    <scope>INTERACTION WITH DHH1</scope>
</reference>
<reference key="17">
    <citation type="journal article" date="2002" name="EMBO J.">
        <title>The DEAD box protein Dhh1 stimulates the decapping enzyme Dcp1.</title>
        <authorList>
            <person name="Fischer N."/>
            <person name="Weis K."/>
        </authorList>
    </citation>
    <scope>INTERACTION WITH DHH1</scope>
</reference>
<reference key="18">
    <citation type="journal article" date="2003" name="Mol. Cell. Biol.">
        <title>Yeast Lsm1p-7p/Pat1p deadenylation-dependent mRNA-decapping factors are required for brome mosaic virus genomic RNA translation.</title>
        <authorList>
            <person name="Noueiry A.O."/>
            <person name="Diez J."/>
            <person name="Falk S.P."/>
            <person name="Chen J."/>
            <person name="Ahlquist P."/>
        </authorList>
    </citation>
    <scope>FUNCTION</scope>
</reference>
<reference key="19">
    <citation type="journal article" date="2003" name="Nature">
        <title>Global analysis of protein expression in yeast.</title>
        <authorList>
            <person name="Ghaemmaghami S."/>
            <person name="Huh W.-K."/>
            <person name="Bower K."/>
            <person name="Howson R.W."/>
            <person name="Belle A."/>
            <person name="Dephoure N."/>
            <person name="O'Shea E.K."/>
            <person name="Weissman J.S."/>
        </authorList>
    </citation>
    <scope>LEVEL OF PROTEIN EXPRESSION [LARGE SCALE ANALYSIS]</scope>
</reference>
<reference key="20">
    <citation type="journal article" date="2003" name="Science">
        <title>Decapping and decay of messenger RNA occur in cytoplasmic processing bodies.</title>
        <authorList>
            <person name="Sheth U."/>
            <person name="Parker R."/>
        </authorList>
    </citation>
    <scope>SUBCELLULAR LOCATION</scope>
</reference>
<reference key="21">
    <citation type="journal article" date="2005" name="Cell">
        <title>General translational repression by activators of mRNA decapping.</title>
        <authorList>
            <person name="Coller J."/>
            <person name="Parker R."/>
        </authorList>
    </citation>
    <scope>FUNCTION</scope>
</reference>
<reference key="22">
    <citation type="journal article" date="2005" name="Genes Dev.">
        <title>The RNA polymerase II subunit Rpb4p mediates decay of a specific class of mRNAs.</title>
        <authorList>
            <person name="Lotan R."/>
            <person name="Bar-On V.G."/>
            <person name="Harel-Sharvit L."/>
            <person name="Duek L."/>
            <person name="Melamed D."/>
            <person name="Choder M."/>
        </authorList>
    </citation>
    <scope>INTERACTION WITH RPB4</scope>
</reference>
<reference key="23">
    <citation type="journal article" date="2005" name="RNA">
        <title>Processing bodies require RNA for assembly and contain nontranslating mRNAs.</title>
        <authorList>
            <person name="Teixeira D."/>
            <person name="Sheth U."/>
            <person name="Valencia-Sanchez M.A."/>
            <person name="Brengues M."/>
            <person name="Parker R."/>
        </authorList>
    </citation>
    <scope>SUBCELLULAR LOCATION</scope>
</reference>
<reference key="24">
    <citation type="journal article" date="2006" name="Cell">
        <title>Targeting of aberrant mRNAs to cytoplasmic processing bodies.</title>
        <authorList>
            <person name="Sheth U."/>
            <person name="Parker R."/>
        </authorList>
    </citation>
    <scope>SUBCELLULAR LOCATION</scope>
</reference>
<reference key="25">
    <citation type="journal article" date="2007" name="J. Cell Biol.">
        <title>The Rpb7p subunit of yeast RNA polymerase II plays roles in the two major cytoplasmic mRNA decay mechanisms.</title>
        <authorList>
            <person name="Lotan R."/>
            <person name="Goler-Baron V."/>
            <person name="Duek L."/>
            <person name="Haimovich G."/>
            <person name="Choder M."/>
        </authorList>
    </citation>
    <scope>FUNCTION</scope>
    <scope>INTERACTION WITH RPB7</scope>
</reference>
<reference key="26">
    <citation type="journal article" date="2007" name="J. Proteome Res.">
        <title>Large-scale phosphorylation analysis of alpha-factor-arrested Saccharomyces cerevisiae.</title>
        <authorList>
            <person name="Li X."/>
            <person name="Gerber S.A."/>
            <person name="Rudner A.D."/>
            <person name="Beausoleil S.A."/>
            <person name="Haas W."/>
            <person name="Villen J."/>
            <person name="Elias J.E."/>
            <person name="Gygi S.P."/>
        </authorList>
    </citation>
    <scope>IDENTIFICATION BY MASS SPECTROMETRY [LARGE SCALE ANALYSIS]</scope>
    <source>
        <strain>ADR376</strain>
    </source>
</reference>
<reference key="27">
    <citation type="journal article" date="2007" name="Mol. Biol. Cell">
        <title>Analysis of P-body assembly in Saccharomyces cerevisiae.</title>
        <authorList>
            <person name="Teixeira D."/>
            <person name="Parker R."/>
        </authorList>
    </citation>
    <scope>FUNCTION</scope>
    <scope>SUBCELLULAR LOCATION</scope>
</reference>
<reference key="28">
    <citation type="journal article" date="2007" name="Proc. Natl. Acad. Sci. U.S.A.">
        <title>Analysis of phosphorylation sites on proteins from Saccharomyces cerevisiae by electron transfer dissociation (ETD) mass spectrometry.</title>
        <authorList>
            <person name="Chi A."/>
            <person name="Huttenhower C."/>
            <person name="Geer L.Y."/>
            <person name="Coon J.J."/>
            <person name="Syka J.E.P."/>
            <person name="Bai D.L."/>
            <person name="Shabanowitz J."/>
            <person name="Burke D.J."/>
            <person name="Troyanskaya O.G."/>
            <person name="Hunt D.F."/>
        </authorList>
    </citation>
    <scope>IDENTIFICATION BY MASS SPECTROMETRY [LARGE SCALE ANALYSIS]</scope>
</reference>
<reference key="29">
    <citation type="journal article" date="2007" name="RNA">
        <title>The decapping activator Lsm1p-7p-Pat1p complex has the intrinsic ability to distinguish between oligoadenylated and polyadenylated RNAs.</title>
        <authorList>
            <person name="Chowdhury A."/>
            <person name="Mukhopadhyay J."/>
            <person name="Tharun S."/>
        </authorList>
    </citation>
    <scope>FUNCTION</scope>
</reference>
<reference key="30">
    <citation type="journal article" date="2008" name="J. Cell Biol.">
        <title>P bodies promote stress granule assembly in Saccharomyces cerevisiae.</title>
        <authorList>
            <person name="Buchan J.R."/>
            <person name="Muhlrad D."/>
            <person name="Parker R."/>
        </authorList>
    </citation>
    <scope>FUNCTION</scope>
</reference>
<reference key="31">
    <citation type="journal article" date="2008" name="Methods Enzymol.">
        <title>Purification and analysis of the decapping activator Lsm1p-7p-Pat1p complex from yeast.</title>
        <authorList>
            <person name="Tharun S."/>
        </authorList>
    </citation>
    <scope>ASSOCIATION WITH THE LSM1-LSM7 COMPLEX</scope>
    <scope>IDENTIFICATION BY MASS SPECTROMETRY</scope>
</reference>
<reference key="32">
    <citation type="journal article" date="2008" name="Mol. Cell. Biol.">
        <title>Pat1 contains distinct functional domains that promote P-body assembly and activation of decapping.</title>
        <authorList>
            <person name="Pilkington G.R."/>
            <person name="Parker R."/>
        </authorList>
    </citation>
    <scope>FUNCTION</scope>
    <scope>SUBCELLULAR LOCATION</scope>
    <scope>DOMAIN</scope>
    <scope>RNA-BINDING</scope>
</reference>
<reference key="33">
    <citation type="journal article" date="2008" name="Mol. Cell. Proteomics">
        <title>A multidimensional chromatography technology for in-depth phosphoproteome analysis.</title>
        <authorList>
            <person name="Albuquerque C.P."/>
            <person name="Smolka M.B."/>
            <person name="Payne S.H."/>
            <person name="Bafna V."/>
            <person name="Eng J."/>
            <person name="Zhou H."/>
        </authorList>
    </citation>
    <scope>IDENTIFICATION BY MASS SPECTROMETRY [LARGE SCALE ANALYSIS]</scope>
</reference>
<reference key="34">
    <citation type="journal article" date="2009" name="Science">
        <title>Global analysis of Cdk1 substrate phosphorylation sites provides insights into evolution.</title>
        <authorList>
            <person name="Holt L.J."/>
            <person name="Tuch B.B."/>
            <person name="Villen J."/>
            <person name="Johnson A.D."/>
            <person name="Gygi S.P."/>
            <person name="Morgan D.O."/>
        </authorList>
    </citation>
    <scope>PHOSPHORYLATION [LARGE SCALE ANALYSIS] AT SER-456 AND SER-457</scope>
    <scope>IDENTIFICATION BY MASS SPECTROMETRY [LARGE SCALE ANALYSIS]</scope>
</reference>
<reference key="35">
    <citation type="journal article" date="2010" name="Mol. Cell. Biol.">
        <title>P-body components are required for Ty1 retrotransposition during assembly of retrotransposition-competent virus-like particles.</title>
        <authorList>
            <person name="Checkley M.A."/>
            <person name="Nagashima K."/>
            <person name="Lockett S.J."/>
            <person name="Nyswaner K.M."/>
            <person name="Garfinkel D.J."/>
        </authorList>
    </citation>
    <scope>FUNCTION</scope>
</reference>
<reference key="36">
    <citation type="journal article" date="2010" name="Mol. Cell">
        <title>Decapping activators in Saccharomyces cerevisiae act by multiple mechanisms.</title>
        <authorList>
            <person name="Nissan T."/>
            <person name="Rajyaguru P."/>
            <person name="She M."/>
            <person name="Song H."/>
            <person name="Parker R."/>
        </authorList>
    </citation>
    <scope>FUNCTION</scope>
</reference>
<reference key="37">
    <citation type="journal article" date="2012" name="Proc. Natl. Acad. Sci. U.S.A.">
        <title>N-terminal acetylome analyses and functional insights of the N-terminal acetyltransferase NatB.</title>
        <authorList>
            <person name="Van Damme P."/>
            <person name="Lasa M."/>
            <person name="Polevoda B."/>
            <person name="Gazquez C."/>
            <person name="Elosegui-Artola A."/>
            <person name="Kim D.S."/>
            <person name="De Juan-Pardo E."/>
            <person name="Demeyer K."/>
            <person name="Hole K."/>
            <person name="Larrea E."/>
            <person name="Timmerman E."/>
            <person name="Prieto J."/>
            <person name="Arnesen T."/>
            <person name="Sherman F."/>
            <person name="Gevaert K."/>
            <person name="Aldabe R."/>
        </authorList>
    </citation>
    <scope>ACETYLATION [LARGE SCALE ANALYSIS] AT SER-2</scope>
    <scope>CLEAVAGE OF INITIATOR METHIONINE [LARGE SCALE ANALYSIS]</scope>
    <scope>IDENTIFICATION BY MASS SPECTROMETRY [LARGE SCALE ANALYSIS]</scope>
</reference>
<reference key="38">
    <citation type="journal article" date="2013" name="Cell">
        <title>Gene expression is circular: factors for mRNA degradation also foster mRNA synthesis.</title>
        <authorList>
            <person name="Haimovich G."/>
            <person name="Medina D.A."/>
            <person name="Causse S.Z."/>
            <person name="Garber M."/>
            <person name="Millan-Zambrano G."/>
            <person name="Barkai O."/>
            <person name="Chavez S."/>
            <person name="Perez-Ortin J.E."/>
            <person name="Darzacq X."/>
            <person name="Choder M."/>
        </authorList>
    </citation>
    <scope>SUBCELLULAR LOCATION</scope>
</reference>
<reference key="39">
    <citation type="journal article" date="2013" name="Genetics">
        <title>Structural integrity of centromeric chromatin and faithful chromosome segregation requires Pat1.</title>
        <authorList>
            <person name="Mishra P.K."/>
            <person name="Ottmann A.R."/>
            <person name="Basrai M.A."/>
        </authorList>
    </citation>
    <scope>FUNCTION</scope>
    <scope>SUBCELLULAR LOCATION</scope>
</reference>
<reference key="40">
    <citation type="journal article" date="2013" name="Nat. Struct. Mol. Biol.">
        <title>Global analysis of yeast mRNPs.</title>
        <authorList>
            <person name="Mitchell S.F."/>
            <person name="Jain S."/>
            <person name="She M."/>
            <person name="Parker R."/>
        </authorList>
    </citation>
    <scope>SUBCELLULAR LOCATION</scope>
</reference>
<reference key="41">
    <citation type="journal article" date="2014" name="RNA">
        <title>Pat1 contributes to the RNA binding activity of the Lsm1-7-Pat1 complex.</title>
        <authorList>
            <person name="Chowdhury A."/>
            <person name="Kalurupalle S."/>
            <person name="Tharun S."/>
        </authorList>
    </citation>
    <scope>FUNCTION</scope>
</reference>
<reference key="42">
    <citation type="journal article" date="2018" name="PLoS Genet.">
        <title>The Lsm1-7/Pat1 complex binds to stress-activated mRNAs and modulates the response to hyperosmotic shock.</title>
        <authorList>
            <person name="Garre E."/>
            <person name="Pelechano V."/>
            <person name="Sanchez Del Pino M."/>
            <person name="Alepuz P."/>
            <person name="Sunnerhagen P."/>
        </authorList>
    </citation>
    <scope>FUNCTION</scope>
    <scope>DISRUPTION PHENOTYPE</scope>
</reference>
<reference key="43">
    <citation type="journal article" date="2013" name="Cell Rep.">
        <title>Architecture of the Lsm1-7-Pat1 complex: a conserved assembly in eukaryotic mRNA turnover.</title>
        <authorList>
            <person name="Sharif H."/>
            <person name="Conti E."/>
        </authorList>
    </citation>
    <scope>X-RAY CRYSTALLOGRAPHY (3.70 ANGSTROMS) OF 456-783 IN COMPLEX WITH THE LSM1-LSM7 COMPLEX</scope>
    <scope>SUBUNIT</scope>
</reference>
<reference key="44">
    <citation type="journal article" date="2014" name="Cell Res.">
        <title>Lsm2 and Lsm3 bridge the interaction of the Lsm1-7 complex with Pat1 for decapping activation.</title>
        <authorList>
            <person name="Wu D."/>
            <person name="Muhlrad D."/>
            <person name="Bowler M.W."/>
            <person name="Jiang S."/>
            <person name="Liu Z."/>
            <person name="Parker R."/>
            <person name="Song H."/>
        </authorList>
    </citation>
    <scope>X-RAY CRYSTALLOGRAPHY (3.15 ANGSTROMS) OF 422-796 IN COMPLEX WITH THE LSM1-LSM7 COMPLEX</scope>
    <scope>FUNCTION</scope>
    <scope>SUBUNIT</scope>
</reference>
<organism>
    <name type="scientific">Saccharomyces cerevisiae (strain ATCC 204508 / S288c)</name>
    <name type="common">Baker's yeast</name>
    <dbReference type="NCBI Taxonomy" id="559292"/>
    <lineage>
        <taxon>Eukaryota</taxon>
        <taxon>Fungi</taxon>
        <taxon>Dikarya</taxon>
        <taxon>Ascomycota</taxon>
        <taxon>Saccharomycotina</taxon>
        <taxon>Saccharomycetes</taxon>
        <taxon>Saccharomycetales</taxon>
        <taxon>Saccharomycetaceae</taxon>
        <taxon>Saccharomyces</taxon>
    </lineage>
</organism>